<dbReference type="EMBL" id="L07361">
    <property type="protein sequence ID" value="AAA51514.1"/>
    <property type="molecule type" value="Genomic_RNA"/>
</dbReference>
<dbReference type="SMR" id="Q07552"/>
<dbReference type="GO" id="GO:0019029">
    <property type="term" value="C:helical viral capsid"/>
    <property type="evidence" value="ECO:0007669"/>
    <property type="project" value="UniProtKB-UniRule"/>
</dbReference>
<dbReference type="GO" id="GO:0043657">
    <property type="term" value="C:host cell"/>
    <property type="evidence" value="ECO:0007669"/>
    <property type="project" value="GOC"/>
</dbReference>
<dbReference type="GO" id="GO:0042025">
    <property type="term" value="C:host cell nucleus"/>
    <property type="evidence" value="ECO:0007669"/>
    <property type="project" value="UniProtKB-SubCell"/>
</dbReference>
<dbReference type="GO" id="GO:1990904">
    <property type="term" value="C:ribonucleoprotein complex"/>
    <property type="evidence" value="ECO:0007669"/>
    <property type="project" value="UniProtKB-KW"/>
</dbReference>
<dbReference type="GO" id="GO:0019013">
    <property type="term" value="C:viral nucleocapsid"/>
    <property type="evidence" value="ECO:0007669"/>
    <property type="project" value="UniProtKB-UniRule"/>
</dbReference>
<dbReference type="GO" id="GO:0003723">
    <property type="term" value="F:RNA binding"/>
    <property type="evidence" value="ECO:0007669"/>
    <property type="project" value="UniProtKB-UniRule"/>
</dbReference>
<dbReference type="GO" id="GO:0005198">
    <property type="term" value="F:structural molecule activity"/>
    <property type="evidence" value="ECO:0007669"/>
    <property type="project" value="UniProtKB-UniRule"/>
</dbReference>
<dbReference type="GO" id="GO:0046718">
    <property type="term" value="P:symbiont entry into host cell"/>
    <property type="evidence" value="ECO:0007669"/>
    <property type="project" value="UniProtKB-KW"/>
</dbReference>
<dbReference type="GO" id="GO:0075732">
    <property type="term" value="P:viral penetration into host nucleus"/>
    <property type="evidence" value="ECO:0007669"/>
    <property type="project" value="UniProtKB-UniRule"/>
</dbReference>
<dbReference type="HAMAP" id="MF_04070">
    <property type="entry name" value="INFV_NCAP"/>
    <property type="match status" value="1"/>
</dbReference>
<dbReference type="InterPro" id="IPR002141">
    <property type="entry name" value="Flu_NP"/>
</dbReference>
<dbReference type="Pfam" id="PF00506">
    <property type="entry name" value="Flu_NP"/>
    <property type="match status" value="1"/>
</dbReference>
<dbReference type="SUPFAM" id="SSF161003">
    <property type="entry name" value="flu NP-like"/>
    <property type="match status" value="1"/>
</dbReference>
<keyword id="KW-0167">Capsid protein</keyword>
<keyword id="KW-1139">Helical capsid protein</keyword>
<keyword id="KW-1048">Host nucleus</keyword>
<keyword id="KW-0945">Host-virus interaction</keyword>
<keyword id="KW-0687">Ribonucleoprotein</keyword>
<keyword id="KW-0694">RNA-binding</keyword>
<keyword id="KW-0543">Viral nucleoprotein</keyword>
<keyword id="KW-1163">Viral penetration into host nucleus</keyword>
<keyword id="KW-0946">Virion</keyword>
<keyword id="KW-1160">Virus entry into host cell</keyword>
<accession>Q07552</accession>
<organism>
    <name type="scientific">Influenza A virus (strain A/Shanghai/31/1980 H3N2)</name>
    <dbReference type="NCBI Taxonomy" id="383569"/>
    <lineage>
        <taxon>Viruses</taxon>
        <taxon>Riboviria</taxon>
        <taxon>Orthornavirae</taxon>
        <taxon>Negarnaviricota</taxon>
        <taxon>Polyploviricotina</taxon>
        <taxon>Insthoviricetes</taxon>
        <taxon>Articulavirales</taxon>
        <taxon>Orthomyxoviridae</taxon>
        <taxon>Alphainfluenzavirus</taxon>
        <taxon>Alphainfluenzavirus influenzae</taxon>
        <taxon>Influenza A virus</taxon>
    </lineage>
</organism>
<reference key="1">
    <citation type="journal article" date="1993" name="J. Virol.">
        <title>Analysis of the evolution and variation of the human influenza A virus nucleoprotein gene from 1933 to 1990.</title>
        <authorList>
            <person name="Shu L.L."/>
            <person name="Bean W.J."/>
            <person name="Webster R.G."/>
        </authorList>
    </citation>
    <scope>NUCLEOTIDE SEQUENCE [GENOMIC RNA]</scope>
</reference>
<feature type="chain" id="PRO_0000079097" description="Nucleoprotein">
    <location>
        <begin position="1"/>
        <end position="498"/>
    </location>
</feature>
<feature type="region of interest" description="Disordered" evidence="2">
    <location>
        <begin position="1"/>
        <end position="21"/>
    </location>
</feature>
<feature type="short sequence motif" description="Unconventional nuclear localization signal" evidence="1">
    <location>
        <begin position="1"/>
        <end position="18"/>
    </location>
</feature>
<feature type="short sequence motif" description="Bipartite nuclear localization signal" evidence="1">
    <location>
        <begin position="198"/>
        <end position="216"/>
    </location>
</feature>
<feature type="compositionally biased region" description="Basic and acidic residues" evidence="2">
    <location>
        <begin position="8"/>
        <end position="21"/>
    </location>
</feature>
<evidence type="ECO:0000255" key="1">
    <source>
        <dbReference type="HAMAP-Rule" id="MF_04070"/>
    </source>
</evidence>
<evidence type="ECO:0000256" key="2">
    <source>
        <dbReference type="SAM" id="MobiDB-lite"/>
    </source>
</evidence>
<name>NCAP_I80A0</name>
<gene>
    <name evidence="1" type="primary">NP</name>
</gene>
<comment type="function">
    <text evidence="1">Encapsidates the negative strand viral RNA, protecting it from nucleases. The encapsidated genomic RNA is termed the ribonucleoprotein (RNP) and serves as template for transcription and replication. The RNP needs to be localized in the host nucleus to start an infectious cycle, but is too large to diffuse through the nuclear pore complex. NP comprises at least 2 nuclear localization signals that are responsible for the active RNP import into the nucleus through cellular importin alpha/beta pathway. Later in the infection, nclear export of RNPs are mediated through viral proteins NEP interacting with M1 which binds nucleoproteins. It is possible that nucleoprotein binds directly host exportin-1/XPO1 and plays an active role in RNPs nuclear export. M1 interaction with RNP seems to hide nucleoprotein's nuclear localization signals. Soon after a virion infects a new cell, M1 dissociates from the RNP under acidification of the virion driven by M2 protein. Dissociation of M1 from RNP unmasks nucleoprotein's nuclear localization signals, targeting the RNP to the nucleus.</text>
</comment>
<comment type="subunit">
    <text evidence="1">Homomultimerizes to form the nucleocapsid. May bind host exportin-1/XPO1. Binds to viral genomic RNA. Protein-RNA contacts are mediated by a combination of electrostatic interactions between positively charged residues and the phosphate backbone and planar interactions between aromatic side chains and bases.</text>
</comment>
<comment type="subcellular location">
    <subcellularLocation>
        <location evidence="1">Virion</location>
    </subcellularLocation>
    <subcellularLocation>
        <location evidence="1">Host nucleus</location>
    </subcellularLocation>
</comment>
<comment type="PTM">
    <text evidence="1">Late in virus-infected cells, may be cleaved from a 56-kDa protein to a 53-kDa protein by a cellular caspase. This cleavage might be a marker for the onset of apoptosis in infected cells or have a specific function in virus host interaction.</text>
</comment>
<comment type="similarity">
    <text evidence="1">Belongs to the influenza viruses nucleoprotein family.</text>
</comment>
<proteinExistence type="inferred from homology"/>
<sequence length="498" mass="56304">MASQGTKRSYEQMETDGERQNATEIRASVGKMIDGIGRFYIQMCTELKLSDYEGRLIQNSLTIERMVLSAFDERRNRYLEEHPSAGKDPKKTGGPIYRRVDGKWMRELILYDKEEIRRIWRQANNGDDATRGLTHMMIWHSNLNDATYQRTRALVRTGMDPRMCSLMQGSTLPRRSGAAGAAVKGVGTMVMELIRMIKRGINDRNFWRGENGRKTRSAYERMCNILKGKFQTAAQRAMMDQVRESRNPGNAEIEDLIFSARSALILRGSVAHKSCLPACVYGPAVSSGYDFEKEGYSLVGIDPFKLLQNSQVYSLIRPNENPAHKSQLVWMACHSAAFEDLRLFSFIRGTKVCPRGKLSTRGVQIASNENMDTMESSTLELRSRYWAIRTRSGGNTNQQRASAGQISVQPTFSVQRNLPFEKSTVMAAFTGNTEGRTSDMRAEIIRMMEGAKPEEVSFRGRGVFELSDEKATNPIVPSFDMSNEGSYFFGDNAEEYDN</sequence>
<organismHost>
    <name type="scientific">Aves</name>
    <dbReference type="NCBI Taxonomy" id="8782"/>
</organismHost>
<organismHost>
    <name type="scientific">Cetacea</name>
    <name type="common">whales</name>
    <dbReference type="NCBI Taxonomy" id="9721"/>
</organismHost>
<organismHost>
    <name type="scientific">Homo sapiens</name>
    <name type="common">Human</name>
    <dbReference type="NCBI Taxonomy" id="9606"/>
</organismHost>
<organismHost>
    <name type="scientific">Phocidae</name>
    <name type="common">true seals</name>
    <dbReference type="NCBI Taxonomy" id="9709"/>
</organismHost>
<organismHost>
    <name type="scientific">Sus scrofa</name>
    <name type="common">Pig</name>
    <dbReference type="NCBI Taxonomy" id="9823"/>
</organismHost>
<protein>
    <recommendedName>
        <fullName evidence="1">Nucleoprotein</fullName>
    </recommendedName>
    <alternativeName>
        <fullName evidence="1">Nucleocapsid protein</fullName>
        <shortName evidence="1">Protein N</shortName>
    </alternativeName>
</protein>